<name>DGGGP_HYPBU</name>
<keyword id="KW-1003">Cell membrane</keyword>
<keyword id="KW-0444">Lipid biosynthesis</keyword>
<keyword id="KW-0443">Lipid metabolism</keyword>
<keyword id="KW-0460">Magnesium</keyword>
<keyword id="KW-0472">Membrane</keyword>
<keyword id="KW-0594">Phospholipid biosynthesis</keyword>
<keyword id="KW-1208">Phospholipid metabolism</keyword>
<keyword id="KW-1185">Reference proteome</keyword>
<keyword id="KW-0808">Transferase</keyword>
<keyword id="KW-0812">Transmembrane</keyword>
<keyword id="KW-1133">Transmembrane helix</keyword>
<accession>A2BIU7</accession>
<protein>
    <recommendedName>
        <fullName evidence="1">Digeranylgeranylglyceryl phosphate synthase</fullName>
        <shortName evidence="1">DGGGP synthase</shortName>
        <shortName evidence="1">DGGGPS</shortName>
        <ecNumber evidence="1">2.5.1.42</ecNumber>
    </recommendedName>
    <alternativeName>
        <fullName evidence="1">(S)-2,3-di-O-geranylgeranylglyceryl phosphate synthase</fullName>
    </alternativeName>
    <alternativeName>
        <fullName evidence="1">Geranylgeranylglycerol-phosphate geranylgeranyltransferase</fullName>
    </alternativeName>
</protein>
<proteinExistence type="inferred from homology"/>
<feature type="chain" id="PRO_0000350696" description="Digeranylgeranylglyceryl phosphate synthase">
    <location>
        <begin position="1"/>
        <end position="302"/>
    </location>
</feature>
<feature type="transmembrane region" description="Helical" evidence="1">
    <location>
        <begin position="21"/>
        <end position="41"/>
    </location>
</feature>
<feature type="transmembrane region" description="Helical" evidence="1">
    <location>
        <begin position="43"/>
        <end position="63"/>
    </location>
</feature>
<feature type="transmembrane region" description="Helical" evidence="1">
    <location>
        <begin position="103"/>
        <end position="123"/>
    </location>
</feature>
<feature type="transmembrane region" description="Helical" evidence="1">
    <location>
        <begin position="144"/>
        <end position="164"/>
    </location>
</feature>
<feature type="transmembrane region" description="Helical" evidence="1">
    <location>
        <begin position="167"/>
        <end position="187"/>
    </location>
</feature>
<feature type="transmembrane region" description="Helical" evidence="1">
    <location>
        <begin position="218"/>
        <end position="238"/>
    </location>
</feature>
<feature type="transmembrane region" description="Helical" evidence="1">
    <location>
        <begin position="244"/>
        <end position="264"/>
    </location>
</feature>
<feature type="transmembrane region" description="Helical" evidence="1">
    <location>
        <begin position="282"/>
        <end position="302"/>
    </location>
</feature>
<organism>
    <name type="scientific">Hyperthermus butylicus (strain DSM 5456 / JCM 9403 / PLM1-5)</name>
    <dbReference type="NCBI Taxonomy" id="415426"/>
    <lineage>
        <taxon>Archaea</taxon>
        <taxon>Thermoproteota</taxon>
        <taxon>Thermoprotei</taxon>
        <taxon>Desulfurococcales</taxon>
        <taxon>Pyrodictiaceae</taxon>
        <taxon>Hyperthermus</taxon>
    </lineage>
</organism>
<sequence>MPQKRLQMLRGLIELVRPHNLVVAALTTLIGYGTVASIYGGDIVSSGYAYAALIVVLVAAGGYVINDYYDIETDMVAKPWRPIVSGRVSPGAARFYAYMLFTIGLIIALVTCPNFIVFGFAVLNALLVHEYSRWIKRTGLPGNIVIAFNSASTIVFGALYASCMIKGKVVLPSVALIPVLYAFLLVLGREFVKGIEDVKGDAIAGIGTLAVRFGVRTAYMASVAVLGLVVVLSPFPYISGVYNMAYLILALVVDVLIAYSLAILGRGVARGLEDAIRASRRARSALKLAFMVGALAFLAGLM</sequence>
<dbReference type="EC" id="2.5.1.42" evidence="1"/>
<dbReference type="EMBL" id="CP000493">
    <property type="protein sequence ID" value="ABM79903.1"/>
    <property type="molecule type" value="Genomic_DNA"/>
</dbReference>
<dbReference type="RefSeq" id="WP_011821220.1">
    <property type="nucleotide sequence ID" value="NC_008818.1"/>
</dbReference>
<dbReference type="SMR" id="A2BIU7"/>
<dbReference type="STRING" id="415426.Hbut_0025"/>
<dbReference type="EnsemblBacteria" id="ABM79903">
    <property type="protein sequence ID" value="ABM79903"/>
    <property type="gene ID" value="Hbut_0025"/>
</dbReference>
<dbReference type="GeneID" id="4781973"/>
<dbReference type="KEGG" id="hbu:Hbut_0025"/>
<dbReference type="eggNOG" id="arCOG00476">
    <property type="taxonomic scope" value="Archaea"/>
</dbReference>
<dbReference type="HOGENOM" id="CLU_073311_0_0_2"/>
<dbReference type="OrthoDB" id="19076at2157"/>
<dbReference type="UniPathway" id="UPA00940"/>
<dbReference type="Proteomes" id="UP000002593">
    <property type="component" value="Chromosome"/>
</dbReference>
<dbReference type="GO" id="GO:0005886">
    <property type="term" value="C:plasma membrane"/>
    <property type="evidence" value="ECO:0007669"/>
    <property type="project" value="UniProtKB-SubCell"/>
</dbReference>
<dbReference type="GO" id="GO:0047295">
    <property type="term" value="F:geranylgeranylglycerol-phosphate geranylgeranyltransferase activity"/>
    <property type="evidence" value="ECO:0007669"/>
    <property type="project" value="UniProtKB-UniRule"/>
</dbReference>
<dbReference type="GO" id="GO:0000287">
    <property type="term" value="F:magnesium ion binding"/>
    <property type="evidence" value="ECO:0007669"/>
    <property type="project" value="UniProtKB-UniRule"/>
</dbReference>
<dbReference type="GO" id="GO:0046474">
    <property type="term" value="P:glycerophospholipid biosynthetic process"/>
    <property type="evidence" value="ECO:0007669"/>
    <property type="project" value="UniProtKB-UniRule"/>
</dbReference>
<dbReference type="CDD" id="cd13961">
    <property type="entry name" value="PT_UbiA_DGGGPS"/>
    <property type="match status" value="1"/>
</dbReference>
<dbReference type="Gene3D" id="1.10.357.140">
    <property type="entry name" value="UbiA prenyltransferase"/>
    <property type="match status" value="1"/>
</dbReference>
<dbReference type="Gene3D" id="1.20.120.1780">
    <property type="entry name" value="UbiA prenyltransferase"/>
    <property type="match status" value="1"/>
</dbReference>
<dbReference type="HAMAP" id="MF_01286">
    <property type="entry name" value="DGGGP_synth"/>
    <property type="match status" value="1"/>
</dbReference>
<dbReference type="InterPro" id="IPR023547">
    <property type="entry name" value="DGGGP_synth"/>
</dbReference>
<dbReference type="InterPro" id="IPR050475">
    <property type="entry name" value="Prenyltransferase_related"/>
</dbReference>
<dbReference type="InterPro" id="IPR000537">
    <property type="entry name" value="UbiA_prenyltransferase"/>
</dbReference>
<dbReference type="InterPro" id="IPR044878">
    <property type="entry name" value="UbiA_sf"/>
</dbReference>
<dbReference type="PANTHER" id="PTHR42723">
    <property type="entry name" value="CHLOROPHYLL SYNTHASE"/>
    <property type="match status" value="1"/>
</dbReference>
<dbReference type="PANTHER" id="PTHR42723:SF1">
    <property type="entry name" value="CHLOROPHYLL SYNTHASE, CHLOROPLASTIC"/>
    <property type="match status" value="1"/>
</dbReference>
<dbReference type="Pfam" id="PF01040">
    <property type="entry name" value="UbiA"/>
    <property type="match status" value="1"/>
</dbReference>
<comment type="function">
    <text evidence="1">Prenyltransferase that catalyzes the transfer of the geranylgeranyl moiety of geranylgeranyl diphosphate (GGPP) to the C2 hydroxyl of (S)-3-O-geranylgeranylglyceryl phosphate (GGGP). This reaction is the second ether-bond-formation step in the biosynthesis of archaeal membrane lipids.</text>
</comment>
<comment type="catalytic activity">
    <reaction evidence="1">
        <text>sn-3-O-(geranylgeranyl)glycerol 1-phosphate + (2E,6E,10E)-geranylgeranyl diphosphate = 2,3-bis-O-(geranylgeranyl)-sn-glycerol 1-phosphate + diphosphate</text>
        <dbReference type="Rhea" id="RHEA:18109"/>
        <dbReference type="ChEBI" id="CHEBI:33019"/>
        <dbReference type="ChEBI" id="CHEBI:57677"/>
        <dbReference type="ChEBI" id="CHEBI:58756"/>
        <dbReference type="ChEBI" id="CHEBI:58837"/>
        <dbReference type="EC" id="2.5.1.42"/>
    </reaction>
</comment>
<comment type="cofactor">
    <cofactor evidence="1">
        <name>Mg(2+)</name>
        <dbReference type="ChEBI" id="CHEBI:18420"/>
    </cofactor>
</comment>
<comment type="pathway">
    <text evidence="1">Membrane lipid metabolism; glycerophospholipid metabolism.</text>
</comment>
<comment type="subcellular location">
    <subcellularLocation>
        <location evidence="1">Cell membrane</location>
        <topology evidence="1">Multi-pass membrane protein</topology>
    </subcellularLocation>
</comment>
<comment type="similarity">
    <text evidence="1">Belongs to the UbiA prenyltransferase family. DGGGP synthase subfamily.</text>
</comment>
<gene>
    <name type="ordered locus">Hbut_0025</name>
</gene>
<reference key="1">
    <citation type="journal article" date="2007" name="Archaea">
        <title>The genome of Hyperthermus butylicus: a sulfur-reducing, peptide fermenting, neutrophilic Crenarchaeote growing up to 108 degrees C.</title>
        <authorList>
            <person name="Bruegger K."/>
            <person name="Chen L."/>
            <person name="Stark M."/>
            <person name="Zibat A."/>
            <person name="Redder P."/>
            <person name="Ruepp A."/>
            <person name="Awayez M."/>
            <person name="She Q."/>
            <person name="Garrett R.A."/>
            <person name="Klenk H.-P."/>
        </authorList>
    </citation>
    <scope>NUCLEOTIDE SEQUENCE [LARGE SCALE GENOMIC DNA]</scope>
    <source>
        <strain>DSM 5456 / JCM 9403 / PLM1-5</strain>
    </source>
</reference>
<evidence type="ECO:0000255" key="1">
    <source>
        <dbReference type="HAMAP-Rule" id="MF_01286"/>
    </source>
</evidence>